<proteinExistence type="inferred from homology"/>
<accession>A2BUC6</accession>
<evidence type="ECO:0000255" key="1">
    <source>
        <dbReference type="HAMAP-Rule" id="MF_00491"/>
    </source>
</evidence>
<comment type="function">
    <text evidence="1">NDH-1 shuttles electrons from NAD(P)H, via FMN and iron-sulfur (Fe-S) centers, to quinones in the respiratory chain. The immediate electron acceptor for the enzyme in this species is believed to be plastoquinone. Couples the redox reaction to proton translocation (for every two electrons transferred, four hydrogen ions are translocated across the cytoplasmic membrane), and thus conserves the redox energy in a proton gradient.</text>
</comment>
<comment type="catalytic activity">
    <reaction evidence="1">
        <text>a plastoquinone + NADH + (n+1) H(+)(in) = a plastoquinol + NAD(+) + n H(+)(out)</text>
        <dbReference type="Rhea" id="RHEA:42608"/>
        <dbReference type="Rhea" id="RHEA-COMP:9561"/>
        <dbReference type="Rhea" id="RHEA-COMP:9562"/>
        <dbReference type="ChEBI" id="CHEBI:15378"/>
        <dbReference type="ChEBI" id="CHEBI:17757"/>
        <dbReference type="ChEBI" id="CHEBI:57540"/>
        <dbReference type="ChEBI" id="CHEBI:57945"/>
        <dbReference type="ChEBI" id="CHEBI:62192"/>
    </reaction>
</comment>
<comment type="catalytic activity">
    <reaction evidence="1">
        <text>a plastoquinone + NADPH + (n+1) H(+)(in) = a plastoquinol + NADP(+) + n H(+)(out)</text>
        <dbReference type="Rhea" id="RHEA:42612"/>
        <dbReference type="Rhea" id="RHEA-COMP:9561"/>
        <dbReference type="Rhea" id="RHEA-COMP:9562"/>
        <dbReference type="ChEBI" id="CHEBI:15378"/>
        <dbReference type="ChEBI" id="CHEBI:17757"/>
        <dbReference type="ChEBI" id="CHEBI:57783"/>
        <dbReference type="ChEBI" id="CHEBI:58349"/>
        <dbReference type="ChEBI" id="CHEBI:62192"/>
    </reaction>
</comment>
<comment type="subcellular location">
    <subcellularLocation>
        <location evidence="1">Cellular thylakoid membrane</location>
        <topology evidence="1">Multi-pass membrane protein</topology>
    </subcellularLocation>
</comment>
<comment type="similarity">
    <text evidence="1">Belongs to the complex I subunit 4 family.</text>
</comment>
<gene>
    <name evidence="1" type="primary">ndhD</name>
    <name type="ordered locus">P9515_01781</name>
</gene>
<dbReference type="EC" id="7.1.1.-" evidence="1"/>
<dbReference type="EMBL" id="CP000552">
    <property type="protein sequence ID" value="ABM71387.1"/>
    <property type="molecule type" value="Genomic_DNA"/>
</dbReference>
<dbReference type="RefSeq" id="WP_011819501.1">
    <property type="nucleotide sequence ID" value="NC_008817.1"/>
</dbReference>
<dbReference type="SMR" id="A2BUC6"/>
<dbReference type="STRING" id="167542.P9515_01781"/>
<dbReference type="GeneID" id="60200532"/>
<dbReference type="KEGG" id="pmc:P9515_01781"/>
<dbReference type="eggNOG" id="COG1008">
    <property type="taxonomic scope" value="Bacteria"/>
</dbReference>
<dbReference type="HOGENOM" id="CLU_007100_4_0_3"/>
<dbReference type="OrthoDB" id="9811718at2"/>
<dbReference type="Proteomes" id="UP000001589">
    <property type="component" value="Chromosome"/>
</dbReference>
<dbReference type="GO" id="GO:0031676">
    <property type="term" value="C:plasma membrane-derived thylakoid membrane"/>
    <property type="evidence" value="ECO:0007669"/>
    <property type="project" value="UniProtKB-SubCell"/>
</dbReference>
<dbReference type="GO" id="GO:0008137">
    <property type="term" value="F:NADH dehydrogenase (ubiquinone) activity"/>
    <property type="evidence" value="ECO:0007669"/>
    <property type="project" value="InterPro"/>
</dbReference>
<dbReference type="GO" id="GO:0048039">
    <property type="term" value="F:ubiquinone binding"/>
    <property type="evidence" value="ECO:0007669"/>
    <property type="project" value="TreeGrafter"/>
</dbReference>
<dbReference type="GO" id="GO:0042773">
    <property type="term" value="P:ATP synthesis coupled electron transport"/>
    <property type="evidence" value="ECO:0007669"/>
    <property type="project" value="InterPro"/>
</dbReference>
<dbReference type="GO" id="GO:0015990">
    <property type="term" value="P:electron transport coupled proton transport"/>
    <property type="evidence" value="ECO:0007669"/>
    <property type="project" value="TreeGrafter"/>
</dbReference>
<dbReference type="HAMAP" id="MF_00491">
    <property type="entry name" value="NDH1_NuoM"/>
    <property type="match status" value="1"/>
</dbReference>
<dbReference type="InterPro" id="IPR022997">
    <property type="entry name" value="NADH_Q_OxRdtase_chain4"/>
</dbReference>
<dbReference type="InterPro" id="IPR010227">
    <property type="entry name" value="NADH_Q_OxRdtase_chainM/4"/>
</dbReference>
<dbReference type="InterPro" id="IPR003918">
    <property type="entry name" value="NADH_UbQ_OxRdtase"/>
</dbReference>
<dbReference type="InterPro" id="IPR001750">
    <property type="entry name" value="ND/Mrp_TM"/>
</dbReference>
<dbReference type="NCBIfam" id="TIGR01972">
    <property type="entry name" value="NDH_I_M"/>
    <property type="match status" value="1"/>
</dbReference>
<dbReference type="NCBIfam" id="NF002713">
    <property type="entry name" value="PRK02546.1"/>
    <property type="match status" value="1"/>
</dbReference>
<dbReference type="NCBIfam" id="NF009212">
    <property type="entry name" value="PRK12561.1"/>
    <property type="match status" value="1"/>
</dbReference>
<dbReference type="PANTHER" id="PTHR43507:SF21">
    <property type="entry name" value="NAD(P)H-QUINONE OXIDOREDUCTASE CHAIN 4, CHLOROPLASTIC"/>
    <property type="match status" value="1"/>
</dbReference>
<dbReference type="PANTHER" id="PTHR43507">
    <property type="entry name" value="NADH-UBIQUINONE OXIDOREDUCTASE CHAIN 4"/>
    <property type="match status" value="1"/>
</dbReference>
<dbReference type="Pfam" id="PF00361">
    <property type="entry name" value="Proton_antipo_M"/>
    <property type="match status" value="1"/>
</dbReference>
<dbReference type="PRINTS" id="PR01437">
    <property type="entry name" value="NUOXDRDTASE4"/>
</dbReference>
<protein>
    <recommendedName>
        <fullName evidence="1">NAD(P)H-quinone oxidoreductase chain 4</fullName>
        <ecNumber evidence="1">7.1.1.-</ecNumber>
    </recommendedName>
    <alternativeName>
        <fullName evidence="1">NAD(P)H dehydrogenase I, chain 4</fullName>
    </alternativeName>
    <alternativeName>
        <fullName evidence="1">NDH-1, chain 4</fullName>
    </alternativeName>
</protein>
<organism>
    <name type="scientific">Prochlorococcus marinus (strain MIT 9515)</name>
    <dbReference type="NCBI Taxonomy" id="167542"/>
    <lineage>
        <taxon>Bacteria</taxon>
        <taxon>Bacillati</taxon>
        <taxon>Cyanobacteriota</taxon>
        <taxon>Cyanophyceae</taxon>
        <taxon>Synechococcales</taxon>
        <taxon>Prochlorococcaceae</taxon>
        <taxon>Prochlorococcus</taxon>
    </lineage>
</organism>
<keyword id="KW-0472">Membrane</keyword>
<keyword id="KW-0520">NAD</keyword>
<keyword id="KW-0521">NADP</keyword>
<keyword id="KW-0618">Plastoquinone</keyword>
<keyword id="KW-0874">Quinone</keyword>
<keyword id="KW-0793">Thylakoid</keyword>
<keyword id="KW-1278">Translocase</keyword>
<keyword id="KW-0812">Transmembrane</keyword>
<keyword id="KW-1133">Transmembrane helix</keyword>
<sequence>MSSLFFTHFALKTIGTLGGGLSDFPWLSISILFPIASAFLIPFFPDKGEGKEVRWFALSVALITFLVTVGAYINGFDINNENVQLKESISWLPKLGLTWSVGADGISMPLILLTSFITALAVLAAWPVKFKPKLFFFLILIMDGGQIAVFAVQDMLLFFLTWELELLPVYLLLAIWGGKNRQYAATKFIIYTAGSSIFILLAALAMGFYGTEVPNFEFAHLANQNFSQNFQILCYIGLLIAFGVKLPIVPLHTWLPDAHGEATAPVHMLLAGILLKMGGYALLRFNAQLLPVAHAQFAPLLIVLGVVNIIYAALTSFAQRNLKRKIAYSSISHMGFVLIGIGSFSSLGTSGAMLQMVSHGLIGASLFFLVGATYDRTKTLKLDEMGGVGQKMRIMFALWTACSLASLALPGMSGFVSELMVFTGFVTDEVYTLPFRVVMASLAAVGVILTPIYLLSMLREIFFGKENPKLTEDRNLIDAEPREVYIIACLLLPIIGIGLYPRLVTESYLATISNLVDRDLNAVKSVPKTNIFAGNKKSQILKAPTI</sequence>
<reference key="1">
    <citation type="journal article" date="2007" name="PLoS Genet.">
        <title>Patterns and implications of gene gain and loss in the evolution of Prochlorococcus.</title>
        <authorList>
            <person name="Kettler G.C."/>
            <person name="Martiny A.C."/>
            <person name="Huang K."/>
            <person name="Zucker J."/>
            <person name="Coleman M.L."/>
            <person name="Rodrigue S."/>
            <person name="Chen F."/>
            <person name="Lapidus A."/>
            <person name="Ferriera S."/>
            <person name="Johnson J."/>
            <person name="Steglich C."/>
            <person name="Church G.M."/>
            <person name="Richardson P."/>
            <person name="Chisholm S.W."/>
        </authorList>
    </citation>
    <scope>NUCLEOTIDE SEQUENCE [LARGE SCALE GENOMIC DNA]</scope>
    <source>
        <strain>MIT 9515</strain>
    </source>
</reference>
<name>NU4C_PROM5</name>
<feature type="chain" id="PRO_0000343241" description="NAD(P)H-quinone oxidoreductase chain 4">
    <location>
        <begin position="1"/>
        <end position="546"/>
    </location>
</feature>
<feature type="transmembrane region" description="Helical" evidence="1">
    <location>
        <begin position="24"/>
        <end position="44"/>
    </location>
</feature>
<feature type="transmembrane region" description="Helical" evidence="1">
    <location>
        <begin position="56"/>
        <end position="76"/>
    </location>
</feature>
<feature type="transmembrane region" description="Helical" evidence="1">
    <location>
        <begin position="106"/>
        <end position="126"/>
    </location>
</feature>
<feature type="transmembrane region" description="Helical" evidence="1">
    <location>
        <begin position="132"/>
        <end position="152"/>
    </location>
</feature>
<feature type="transmembrane region" description="Helical" evidence="1">
    <location>
        <begin position="156"/>
        <end position="176"/>
    </location>
</feature>
<feature type="transmembrane region" description="Helical" evidence="1">
    <location>
        <begin position="188"/>
        <end position="208"/>
    </location>
</feature>
<feature type="transmembrane region" description="Helical" evidence="1">
    <location>
        <begin position="232"/>
        <end position="252"/>
    </location>
</feature>
<feature type="transmembrane region" description="Helical" evidence="1">
    <location>
        <begin position="263"/>
        <end position="283"/>
    </location>
</feature>
<feature type="transmembrane region" description="Helical" evidence="1">
    <location>
        <begin position="297"/>
        <end position="317"/>
    </location>
</feature>
<feature type="transmembrane region" description="Helical" evidence="1">
    <location>
        <begin position="326"/>
        <end position="346"/>
    </location>
</feature>
<feature type="transmembrane region" description="Helical" evidence="1">
    <location>
        <begin position="352"/>
        <end position="372"/>
    </location>
</feature>
<feature type="transmembrane region" description="Helical" evidence="1">
    <location>
        <begin position="396"/>
        <end position="416"/>
    </location>
</feature>
<feature type="transmembrane region" description="Helical" evidence="1">
    <location>
        <begin position="437"/>
        <end position="457"/>
    </location>
</feature>
<feature type="transmembrane region" description="Helical" evidence="1">
    <location>
        <begin position="484"/>
        <end position="504"/>
    </location>
</feature>